<proteinExistence type="evidence at protein level"/>
<organism>
    <name type="scientific">Lacticaseibacillus paracasei (strain ATCC 334 / BCRC 17002 / CCUG 31169 / CIP 107868 / KCTC 3260 / NRRL B-441)</name>
    <name type="common">Lactobacillus paracasei</name>
    <dbReference type="NCBI Taxonomy" id="321967"/>
    <lineage>
        <taxon>Bacteria</taxon>
        <taxon>Bacillati</taxon>
        <taxon>Bacillota</taxon>
        <taxon>Bacilli</taxon>
        <taxon>Lactobacillales</taxon>
        <taxon>Lactobacillaceae</taxon>
        <taxon>Lacticaseibacillus</taxon>
    </lineage>
</organism>
<sequence length="201" mass="21249">MQQHKQLVVILETAIIAAFAMALTYIPHTTGVSAIELNYGLIPIAVLAMRRGLVPAAWAGFVWGILDLILRGIGGGSVLNPLQGILEYPIAFTLVGLMGLTFASFQKAVRGSEKVKASGYAFAGIIIGTFAKYFIHFIAGVVFWGAYAPKGTNVWVYSLIVNGGSALFSTVLTIVVVGVLLTVAPQLFVAKDGKSFSTKAA</sequence>
<evidence type="ECO:0000255" key="1"/>
<evidence type="ECO:0000269" key="2">
    <source>
    </source>
</evidence>
<evidence type="ECO:0000305" key="3"/>
<dbReference type="EMBL" id="CP000423">
    <property type="protein sequence ID" value="ABJ70529.1"/>
    <property type="molecule type" value="Genomic_DNA"/>
</dbReference>
<dbReference type="RefSeq" id="WP_003576020.1">
    <property type="nucleotide sequence ID" value="NC_008526.1"/>
</dbReference>
<dbReference type="RefSeq" id="YP_806971.1">
    <property type="nucleotide sequence ID" value="NC_008526.1"/>
</dbReference>
<dbReference type="SMR" id="Q037U3"/>
<dbReference type="STRING" id="321967.LSEI_1757"/>
<dbReference type="TCDB" id="2.A.88.3.3">
    <property type="family name" value="the vitamin uptake transporter (vut) family"/>
</dbReference>
<dbReference type="PaxDb" id="321967-LSEI_1757"/>
<dbReference type="KEGG" id="lca:LSEI_1757"/>
<dbReference type="PATRIC" id="fig|321967.11.peg.1736"/>
<dbReference type="HOGENOM" id="CLU_090959_2_0_9"/>
<dbReference type="Proteomes" id="UP000001651">
    <property type="component" value="Chromosome"/>
</dbReference>
<dbReference type="GO" id="GO:0005886">
    <property type="term" value="C:plasma membrane"/>
    <property type="evidence" value="ECO:0007669"/>
    <property type="project" value="UniProtKB-SubCell"/>
</dbReference>
<dbReference type="GO" id="GO:0015234">
    <property type="term" value="F:thiamine transmembrane transporter activity"/>
    <property type="evidence" value="ECO:0007669"/>
    <property type="project" value="InterPro"/>
</dbReference>
<dbReference type="Gene3D" id="1.10.1760.20">
    <property type="match status" value="1"/>
</dbReference>
<dbReference type="InterPro" id="IPR012651">
    <property type="entry name" value="Thia_Transptr_ThiT"/>
</dbReference>
<dbReference type="NCBIfam" id="TIGR02357">
    <property type="entry name" value="ECF_ThiT_YuaJ"/>
    <property type="match status" value="1"/>
</dbReference>
<dbReference type="Pfam" id="PF09515">
    <property type="entry name" value="Thia_YuaJ"/>
    <property type="match status" value="1"/>
</dbReference>
<gene>
    <name type="primary">thiT</name>
    <name type="ordered locus">LSEI_1757</name>
</gene>
<reference key="1">
    <citation type="journal article" date="2006" name="Proc. Natl. Acad. Sci. U.S.A.">
        <title>Comparative genomics of the lactic acid bacteria.</title>
        <authorList>
            <person name="Makarova K.S."/>
            <person name="Slesarev A."/>
            <person name="Wolf Y.I."/>
            <person name="Sorokin A."/>
            <person name="Mirkin B."/>
            <person name="Koonin E.V."/>
            <person name="Pavlov A."/>
            <person name="Pavlova N."/>
            <person name="Karamychev V."/>
            <person name="Polouchine N."/>
            <person name="Shakhova V."/>
            <person name="Grigoriev I."/>
            <person name="Lou Y."/>
            <person name="Rohksar D."/>
            <person name="Lucas S."/>
            <person name="Huang K."/>
            <person name="Goodstein D.M."/>
            <person name="Hawkins T."/>
            <person name="Plengvidhya V."/>
            <person name="Welker D."/>
            <person name="Hughes J."/>
            <person name="Goh Y."/>
            <person name="Benson A."/>
            <person name="Baldwin K."/>
            <person name="Lee J.-H."/>
            <person name="Diaz-Muniz I."/>
            <person name="Dosti B."/>
            <person name="Smeianov V."/>
            <person name="Wechter W."/>
            <person name="Barabote R."/>
            <person name="Lorca G."/>
            <person name="Altermann E."/>
            <person name="Barrangou R."/>
            <person name="Ganesan B."/>
            <person name="Xie Y."/>
            <person name="Rawsthorne H."/>
            <person name="Tamir D."/>
            <person name="Parker C."/>
            <person name="Breidt F."/>
            <person name="Broadbent J.R."/>
            <person name="Hutkins R."/>
            <person name="O'Sullivan D."/>
            <person name="Steele J."/>
            <person name="Unlu G."/>
            <person name="Saier M.H. Jr."/>
            <person name="Klaenhammer T."/>
            <person name="Richardson P."/>
            <person name="Kozyavkin S."/>
            <person name="Weimer B.C."/>
            <person name="Mills D.A."/>
        </authorList>
    </citation>
    <scope>NUCLEOTIDE SEQUENCE [LARGE SCALE GENOMIC DNA]</scope>
    <source>
        <strain>ATCC 334 / BCRC 17002 / CCUG 31169 / CIP 107868 / KCTC 3260 / NRRL B-441</strain>
    </source>
</reference>
<reference key="2">
    <citation type="journal article" date="2008" name="J. Bacteriol.">
        <title>Identification of genes encoding the folate- and thiamine-binding membrane proteins in Firmicutes.</title>
        <authorList>
            <person name="Eudes A."/>
            <person name="Erkens G.B."/>
            <person name="Slotboom D.J."/>
            <person name="Rodionov D.A."/>
            <person name="Naponelli V."/>
            <person name="Hanson A.D."/>
        </authorList>
    </citation>
    <scope>THIAMINE-BINDING</scope>
    <source>
        <strain>ATCC 334 / BCRC 17002 / CCUG 31169 / CIP 107868 / KCTC 3260 / NRRL B-441</strain>
    </source>
</reference>
<reference key="3">
    <citation type="journal article" date="2009" name="J. Bacteriol.">
        <title>A novel class of modular transporters for vitamins in prokaryotes.</title>
        <authorList>
            <person name="Rodionov D.A."/>
            <person name="Hebbeln P."/>
            <person name="Eudes A."/>
            <person name="ter Beek J."/>
            <person name="Rodionova I.A."/>
            <person name="Erkens G.B."/>
            <person name="Slotboom D.J."/>
            <person name="Gelfand M.S."/>
            <person name="Osterman A.L."/>
            <person name="Hanson A.D."/>
            <person name="Eitinger T."/>
        </authorList>
    </citation>
    <scope>FUNCTION AS A TRANSPORT COMPONENT</scope>
    <scope>PROBABLE SUBUNIT</scope>
    <scope>EXPRESSION IN L.LACTIS</scope>
    <source>
        <strain>ATCC 334 / BCRC 17002 / CCUG 31169 / CIP 107868 / KCTC 3260 / NRRL B-441</strain>
    </source>
</reference>
<keyword id="KW-1003">Cell membrane</keyword>
<keyword id="KW-0472">Membrane</keyword>
<keyword id="KW-1185">Reference proteome</keyword>
<keyword id="KW-0812">Transmembrane</keyword>
<keyword id="KW-1133">Transmembrane helix</keyword>
<keyword id="KW-0813">Transport</keyword>
<accession>Q037U3</accession>
<comment type="function">
    <text evidence="2">Thiamine-binding protein that interacts with the energy-coupling factor (ECF) ABC-transporter complex. Unlike classic ABC transporters this ECF transporter provides the energy necessary to transport a number of different substrates. The substrates themselves are bound by transmembrane, not extracytoplasmic soluble proteins and transport it into cells. Binds thiamine with a dissociation constant of 0.5 nM. Upon coexpression with its energy-coupling factor (ECF) ABC-transporter complex EcfA1A2T in Lactococcus lactis subsp. cremoris (strain NZ9000) allows thiamine uptake; uptake requires both ThiT and EcfA1A2T.</text>
</comment>
<comment type="subunit">
    <text>In Lactococcus lactis subsp. cremoris (strain NZ9000) forms a stable energy-coupling factor (ECF) transporter complex probably composed of a membrane-embedded substrate-binding protein (S component), two ATP-binding proteins (A components) and a transmembrane protein (T component).</text>
</comment>
<comment type="subcellular location">
    <subcellularLocation>
        <location evidence="3">Cell membrane</location>
        <topology evidence="3">Multi-pass membrane protein</topology>
    </subcellularLocation>
</comment>
<comment type="similarity">
    <text evidence="3">Belongs to the vitamin uptake transporter (VUT/ECF) (TC 2.A.88) family. Thiamine transporter subfamily.</text>
</comment>
<name>THIT_LACP3</name>
<feature type="chain" id="PRO_0000409008" description="Thiamine transporter ThiT">
    <location>
        <begin position="1"/>
        <end position="201"/>
    </location>
</feature>
<feature type="transmembrane region" description="Helical" evidence="1">
    <location>
        <begin position="7"/>
        <end position="27"/>
    </location>
</feature>
<feature type="transmembrane region" description="Helical" evidence="1">
    <location>
        <begin position="29"/>
        <end position="49"/>
    </location>
</feature>
<feature type="transmembrane region" description="Helical" evidence="1">
    <location>
        <begin position="53"/>
        <end position="73"/>
    </location>
</feature>
<feature type="transmembrane region" description="Helical" evidence="1">
    <location>
        <begin position="85"/>
        <end position="105"/>
    </location>
</feature>
<feature type="transmembrane region" description="Helical" evidence="1">
    <location>
        <begin position="124"/>
        <end position="144"/>
    </location>
</feature>
<feature type="transmembrane region" description="Helical" evidence="1">
    <location>
        <begin position="170"/>
        <end position="190"/>
    </location>
</feature>
<protein>
    <recommendedName>
        <fullName>Thiamine transporter ThiT</fullName>
    </recommendedName>
    <alternativeName>
        <fullName>Thiamine ECF transporter S component ThiT</fullName>
    </alternativeName>
</protein>